<evidence type="ECO:0000255" key="1">
    <source>
        <dbReference type="HAMAP-Rule" id="MF_00360"/>
    </source>
</evidence>
<evidence type="ECO:0000256" key="2">
    <source>
        <dbReference type="SAM" id="MobiDB-lite"/>
    </source>
</evidence>
<evidence type="ECO:0000305" key="3"/>
<reference key="1">
    <citation type="journal article" date="2011" name="J. Bacteriol.">
        <title>Comparative genomics of 28 Salmonella enterica isolates: evidence for CRISPR-mediated adaptive sublineage evolution.</title>
        <authorList>
            <person name="Fricke W.F."/>
            <person name="Mammel M.K."/>
            <person name="McDermott P.F."/>
            <person name="Tartera C."/>
            <person name="White D.G."/>
            <person name="Leclerc J.E."/>
            <person name="Ravel J."/>
            <person name="Cebula T.A."/>
        </authorList>
    </citation>
    <scope>NUCLEOTIDE SEQUENCE [LARGE SCALE GENOMIC DNA]</scope>
    <source>
        <strain>SL476</strain>
    </source>
</reference>
<accession>B4TFD5</accession>
<gene>
    <name evidence="1" type="primary">rpsF</name>
    <name type="ordered locus">SeHA_C4809</name>
</gene>
<dbReference type="EMBL" id="CP001120">
    <property type="protein sequence ID" value="ACF69446.1"/>
    <property type="molecule type" value="Genomic_DNA"/>
</dbReference>
<dbReference type="RefSeq" id="WP_001216673.1">
    <property type="nucleotide sequence ID" value="NC_011083.1"/>
</dbReference>
<dbReference type="SMR" id="B4TFD5"/>
<dbReference type="GeneID" id="92804768"/>
<dbReference type="KEGG" id="seh:SeHA_C4809"/>
<dbReference type="HOGENOM" id="CLU_113441_6_1_6"/>
<dbReference type="Proteomes" id="UP000001866">
    <property type="component" value="Chromosome"/>
</dbReference>
<dbReference type="GO" id="GO:0022627">
    <property type="term" value="C:cytosolic small ribosomal subunit"/>
    <property type="evidence" value="ECO:0007669"/>
    <property type="project" value="TreeGrafter"/>
</dbReference>
<dbReference type="GO" id="GO:0070181">
    <property type="term" value="F:small ribosomal subunit rRNA binding"/>
    <property type="evidence" value="ECO:0007669"/>
    <property type="project" value="TreeGrafter"/>
</dbReference>
<dbReference type="GO" id="GO:0003735">
    <property type="term" value="F:structural constituent of ribosome"/>
    <property type="evidence" value="ECO:0007669"/>
    <property type="project" value="InterPro"/>
</dbReference>
<dbReference type="GO" id="GO:0006412">
    <property type="term" value="P:translation"/>
    <property type="evidence" value="ECO:0007669"/>
    <property type="project" value="UniProtKB-UniRule"/>
</dbReference>
<dbReference type="CDD" id="cd00473">
    <property type="entry name" value="bS6"/>
    <property type="match status" value="1"/>
</dbReference>
<dbReference type="FunFam" id="3.30.70.60:FF:000003">
    <property type="entry name" value="30S ribosomal protein S6"/>
    <property type="match status" value="1"/>
</dbReference>
<dbReference type="Gene3D" id="3.30.70.60">
    <property type="match status" value="1"/>
</dbReference>
<dbReference type="HAMAP" id="MF_00360">
    <property type="entry name" value="Ribosomal_bS6"/>
    <property type="match status" value="1"/>
</dbReference>
<dbReference type="InterPro" id="IPR000529">
    <property type="entry name" value="Ribosomal_bS6"/>
</dbReference>
<dbReference type="InterPro" id="IPR020815">
    <property type="entry name" value="Ribosomal_bS6_CS"/>
</dbReference>
<dbReference type="InterPro" id="IPR035980">
    <property type="entry name" value="Ribosomal_bS6_sf"/>
</dbReference>
<dbReference type="InterPro" id="IPR020814">
    <property type="entry name" value="Ribosomal_S6_plastid/chlpt"/>
</dbReference>
<dbReference type="InterPro" id="IPR014717">
    <property type="entry name" value="Transl_elong_EF1B/ribsomal_bS6"/>
</dbReference>
<dbReference type="NCBIfam" id="TIGR00166">
    <property type="entry name" value="S6"/>
    <property type="match status" value="1"/>
</dbReference>
<dbReference type="PANTHER" id="PTHR21011">
    <property type="entry name" value="MITOCHONDRIAL 28S RIBOSOMAL PROTEIN S6"/>
    <property type="match status" value="1"/>
</dbReference>
<dbReference type="PANTHER" id="PTHR21011:SF1">
    <property type="entry name" value="SMALL RIBOSOMAL SUBUNIT PROTEIN BS6M"/>
    <property type="match status" value="1"/>
</dbReference>
<dbReference type="Pfam" id="PF01250">
    <property type="entry name" value="Ribosomal_S6"/>
    <property type="match status" value="1"/>
</dbReference>
<dbReference type="SUPFAM" id="SSF54995">
    <property type="entry name" value="Ribosomal protein S6"/>
    <property type="match status" value="1"/>
</dbReference>
<dbReference type="PROSITE" id="PS01048">
    <property type="entry name" value="RIBOSOMAL_S6"/>
    <property type="match status" value="1"/>
</dbReference>
<proteinExistence type="inferred from homology"/>
<protein>
    <recommendedName>
        <fullName evidence="1">Small ribosomal subunit protein bS6</fullName>
    </recommendedName>
    <alternativeName>
        <fullName evidence="3">30S ribosomal protein S6</fullName>
    </alternativeName>
</protein>
<name>RS6_SALHS</name>
<organism>
    <name type="scientific">Salmonella heidelberg (strain SL476)</name>
    <dbReference type="NCBI Taxonomy" id="454169"/>
    <lineage>
        <taxon>Bacteria</taxon>
        <taxon>Pseudomonadati</taxon>
        <taxon>Pseudomonadota</taxon>
        <taxon>Gammaproteobacteria</taxon>
        <taxon>Enterobacterales</taxon>
        <taxon>Enterobacteriaceae</taxon>
        <taxon>Salmonella</taxon>
    </lineage>
</organism>
<comment type="function">
    <text evidence="1">Binds together with bS18 to 16S ribosomal RNA.</text>
</comment>
<comment type="similarity">
    <text evidence="1">Belongs to the bacterial ribosomal protein bS6 family.</text>
</comment>
<feature type="chain" id="PRO_1000120800" description="Small ribosomal subunit protein bS6">
    <location>
        <begin position="1"/>
        <end position="131"/>
    </location>
</feature>
<feature type="region of interest" description="Disordered" evidence="2">
    <location>
        <begin position="98"/>
        <end position="131"/>
    </location>
</feature>
<feature type="compositionally biased region" description="Basic and acidic residues" evidence="2">
    <location>
        <begin position="104"/>
        <end position="116"/>
    </location>
</feature>
<feature type="compositionally biased region" description="Acidic residues" evidence="2">
    <location>
        <begin position="120"/>
        <end position="131"/>
    </location>
</feature>
<sequence length="131" mass="15173">MRHYEIVFMVHPDQSEQVPGMIERYSAAITGAEGKIHRLEDWGRRQLAYPINKLHKAHYVLMNVEAPQEVIDELETTFRFNDAVIRSMVMRTKHAVTEASPMVKAKDERRERRDDFANETADDAEAGDSEE</sequence>
<keyword id="KW-0687">Ribonucleoprotein</keyword>
<keyword id="KW-0689">Ribosomal protein</keyword>
<keyword id="KW-0694">RNA-binding</keyword>
<keyword id="KW-0699">rRNA-binding</keyword>